<reference key="1">
    <citation type="journal article" date="1997" name="Nature">
        <title>The nucleotide sequence of Saccharomyces cerevisiae chromosome V.</title>
        <authorList>
            <person name="Dietrich F.S."/>
            <person name="Mulligan J.T."/>
            <person name="Hennessy K.M."/>
            <person name="Yelton M.A."/>
            <person name="Allen E."/>
            <person name="Araujo R."/>
            <person name="Aviles E."/>
            <person name="Berno A."/>
            <person name="Brennan T."/>
            <person name="Carpenter J."/>
            <person name="Chen E."/>
            <person name="Cherry J.M."/>
            <person name="Chung E."/>
            <person name="Duncan M."/>
            <person name="Guzman E."/>
            <person name="Hartzell G."/>
            <person name="Hunicke-Smith S."/>
            <person name="Hyman R.W."/>
            <person name="Kayser A."/>
            <person name="Komp C."/>
            <person name="Lashkari D."/>
            <person name="Lew H."/>
            <person name="Lin D."/>
            <person name="Mosedale D."/>
            <person name="Nakahara K."/>
            <person name="Namath A."/>
            <person name="Norgren R."/>
            <person name="Oefner P."/>
            <person name="Oh C."/>
            <person name="Petel F.X."/>
            <person name="Roberts D."/>
            <person name="Sehl P."/>
            <person name="Schramm S."/>
            <person name="Shogren T."/>
            <person name="Smith V."/>
            <person name="Taylor P."/>
            <person name="Wei Y."/>
            <person name="Botstein D."/>
            <person name="Davis R.W."/>
        </authorList>
    </citation>
    <scope>NUCLEOTIDE SEQUENCE [LARGE SCALE GENOMIC DNA]</scope>
    <source>
        <strain>ATCC 204508 / S288c</strain>
    </source>
</reference>
<reference key="2">
    <citation type="journal article" date="2014" name="G3 (Bethesda)">
        <title>The reference genome sequence of Saccharomyces cerevisiae: Then and now.</title>
        <authorList>
            <person name="Engel S.R."/>
            <person name="Dietrich F.S."/>
            <person name="Fisk D.G."/>
            <person name="Binkley G."/>
            <person name="Balakrishnan R."/>
            <person name="Costanzo M.C."/>
            <person name="Dwight S.S."/>
            <person name="Hitz B.C."/>
            <person name="Karra K."/>
            <person name="Nash R.S."/>
            <person name="Weng S."/>
            <person name="Wong E.D."/>
            <person name="Lloyd P."/>
            <person name="Skrzypek M.S."/>
            <person name="Miyasato S.R."/>
            <person name="Simison M."/>
            <person name="Cherry J.M."/>
        </authorList>
    </citation>
    <scope>GENOME REANNOTATION</scope>
    <source>
        <strain>ATCC 204508 / S288c</strain>
    </source>
</reference>
<reference key="3">
    <citation type="journal article" date="1997" name="Mol. Gen. Genet.">
        <title>Overexpression of the protein kinase Pak1 suppresses yeast DNA polymerase mutations.</title>
        <authorList>
            <person name="Hovland P.G."/>
            <person name="Tecklenberg M."/>
            <person name="Sclafani R.A."/>
        </authorList>
    </citation>
    <scope>NUCLEOTIDE SEQUENCE [GENOMIC DNA] OF 1-657</scope>
    <scope>FUNCTION</scope>
    <source>
        <strain>ATCC 204626 / S288c / A364A</strain>
    </source>
</reference>
<reference key="4">
    <citation type="journal article" date="1997" name="Trends Biochem. Sci.">
        <title>The protein kinases of budding yeast: six score and more.</title>
        <authorList>
            <person name="Hunter T."/>
            <person name="Plowman G.D."/>
        </authorList>
    </citation>
    <scope>PREDICTION OF FUNCTION</scope>
</reference>
<reference key="5">
    <citation type="journal article" date="2003" name="Curr. Biol.">
        <title>Elm1p is one of three upstream kinases for the Saccharomyces cerevisiae SNF1 complex.</title>
        <authorList>
            <person name="Sutherland C.M."/>
            <person name="Hawley S.A."/>
            <person name="McCartney R.R."/>
            <person name="Leech A."/>
            <person name="Stark M.J.R."/>
            <person name="Schmidt M.C."/>
            <person name="Hardie D.G."/>
        </authorList>
    </citation>
    <scope>FUNCTION</scope>
</reference>
<reference key="6">
    <citation type="journal article" date="2003" name="Mol. Cell. Biol.">
        <title>Yeast Pak1 kinase associates with and activates Snf1.</title>
        <authorList>
            <person name="Nath N."/>
            <person name="McCartney R.R."/>
            <person name="Schmidt M.C."/>
        </authorList>
    </citation>
    <scope>FUNCTION</scope>
    <scope>INTERACTION WITH SNF1</scope>
</reference>
<reference key="7">
    <citation type="journal article" date="2003" name="Nature">
        <title>Global analysis of protein localization in budding yeast.</title>
        <authorList>
            <person name="Huh W.-K."/>
            <person name="Falvo J.V."/>
            <person name="Gerke L.C."/>
            <person name="Carroll A.S."/>
            <person name="Howson R.W."/>
            <person name="Weissman J.S."/>
            <person name="O'Shea E.K."/>
        </authorList>
    </citation>
    <scope>SUBCELLULAR LOCATION [LARGE SCALE ANALYSIS]</scope>
</reference>
<reference key="8">
    <citation type="journal article" date="2003" name="Nature">
        <title>Global analysis of protein expression in yeast.</title>
        <authorList>
            <person name="Ghaemmaghami S."/>
            <person name="Huh W.-K."/>
            <person name="Bower K."/>
            <person name="Howson R.W."/>
            <person name="Belle A."/>
            <person name="Dephoure N."/>
            <person name="O'Shea E.K."/>
            <person name="Weissman J.S."/>
        </authorList>
    </citation>
    <scope>LEVEL OF PROTEIN EXPRESSION [LARGE SCALE ANALYSIS]</scope>
</reference>
<reference key="9">
    <citation type="journal article" date="2003" name="Proc. Natl. Acad. Sci. U.S.A.">
        <title>Activation of yeast Snf1 and mammalian AMP-activated protein kinase by upstream kinases.</title>
        <authorList>
            <person name="Hong S.-P."/>
            <person name="Leiper F.C."/>
            <person name="Woods A."/>
            <person name="Carling D."/>
            <person name="Carlson M."/>
        </authorList>
    </citation>
    <scope>FUNCTION</scope>
</reference>
<reference key="10">
    <citation type="journal article" date="2004" name="Mol. Cell. Biol.">
        <title>Pak1 protein kinase regulates activation and nuclear localization of Snf1-Gal83 protein kinase.</title>
        <authorList>
            <person name="Hedbacker K."/>
            <person name="Hong S.-P."/>
            <person name="Carlson M."/>
        </authorList>
    </citation>
    <scope>FUNCTION</scope>
</reference>
<reference key="11">
    <citation type="journal article" date="2005" name="Curr. Genet.">
        <title>Snf1 kinase complexes with different beta subunits display stress-dependent preferences for the three Snf1-activating kinases.</title>
        <authorList>
            <person name="McCartney R.R."/>
            <person name="Rubenstein E.M."/>
            <person name="Schmidt M.C."/>
        </authorList>
    </citation>
    <scope>FUNCTION</scope>
</reference>
<reference key="12">
    <citation type="journal article" date="2005" name="Mol. Cell. Proteomics">
        <title>Quantitative phosphoproteomics applied to the yeast pheromone signaling pathway.</title>
        <authorList>
            <person name="Gruhler A."/>
            <person name="Olsen J.V."/>
            <person name="Mohammed S."/>
            <person name="Mortensen P."/>
            <person name="Faergeman N.J."/>
            <person name="Mann M."/>
            <person name="Jensen O.N."/>
        </authorList>
    </citation>
    <scope>PHOSPHORYLATION [LARGE SCALE ANALYSIS] AT SER-1126</scope>
    <scope>IDENTIFICATION BY MASS SPECTROMETRY [LARGE SCALE ANALYSIS]</scope>
    <source>
        <strain>YAL6B</strain>
    </source>
</reference>
<reference key="13">
    <citation type="journal article" date="2006" name="Biochem. J.">
        <title>Purification and characterization of the three Snf1-activating kinases of Saccharomyces cerevisiae.</title>
        <authorList>
            <person name="Elbing K."/>
            <person name="McCartney R.R."/>
            <person name="Schmidt M.C."/>
        </authorList>
    </citation>
    <scope>FUNCTION</scope>
    <scope>ASSOCIATION WITH THE SNF1 KINASE COMPLEX</scope>
    <scope>INTERACTION WITH SNF1</scope>
</reference>
<reference key="14">
    <citation type="journal article" date="2006" name="Eukaryot. Cell">
        <title>Regulatory domains of Snf1-activating kinases determine pathway specificity.</title>
        <authorList>
            <person name="Rubenstein E.M."/>
            <person name="McCartney R.R."/>
            <person name="Schmidt M.C."/>
        </authorList>
    </citation>
    <scope>FUNCTION</scope>
    <scope>DOMAIN</scope>
</reference>
<reference key="15">
    <citation type="journal article" date="2006" name="J. Biol. Chem.">
        <title>Subunits of the Snf1 kinase heterotrimer show interdependence for association and activity.</title>
        <authorList>
            <person name="Elbing K."/>
            <person name="Rubenstein E.M."/>
            <person name="McCartney R.R."/>
            <person name="Schmidt M.C."/>
        </authorList>
    </citation>
    <scope>FUNCTION</scope>
    <scope>INTERACTION WITH SNF1</scope>
</reference>
<reference key="16">
    <citation type="journal article" date="2007" name="J. Biol. Chem.">
        <title>Regulation of snf1 protein kinase in response to environmental stress.</title>
        <authorList>
            <person name="Hong S.-P."/>
            <person name="Carlson M."/>
        </authorList>
    </citation>
    <scope>FUNCTION</scope>
</reference>
<reference key="17">
    <citation type="journal article" date="2007" name="J. Proteome Res.">
        <title>Large-scale phosphorylation analysis of alpha-factor-arrested Saccharomyces cerevisiae.</title>
        <authorList>
            <person name="Li X."/>
            <person name="Gerber S.A."/>
            <person name="Rudner A.D."/>
            <person name="Beausoleil S.A."/>
            <person name="Haas W."/>
            <person name="Villen J."/>
            <person name="Elias J.E."/>
            <person name="Gygi S.P."/>
        </authorList>
    </citation>
    <scope>PHOSPHORYLATION [LARGE SCALE ANALYSIS] AT SER-1126</scope>
    <scope>IDENTIFICATION BY MASS SPECTROMETRY [LARGE SCALE ANALYSIS]</scope>
    <source>
        <strain>ADR376</strain>
    </source>
</reference>
<reference key="18">
    <citation type="journal article" date="2007" name="Proc. Natl. Acad. Sci. U.S.A.">
        <title>Analysis of phosphorylation sites on proteins from Saccharomyces cerevisiae by electron transfer dissociation (ETD) mass spectrometry.</title>
        <authorList>
            <person name="Chi A."/>
            <person name="Huttenhower C."/>
            <person name="Geer L.Y."/>
            <person name="Coon J.J."/>
            <person name="Syka J.E.P."/>
            <person name="Bai D.L."/>
            <person name="Shabanowitz J."/>
            <person name="Burke D.J."/>
            <person name="Troyanskaya O.G."/>
            <person name="Hunt D.F."/>
        </authorList>
    </citation>
    <scope>IDENTIFICATION BY MASS SPECTROMETRY [LARGE SCALE ANALYSIS]</scope>
</reference>
<reference key="19">
    <citation type="journal article" date="2008" name="Mol. Cell. Proteomics">
        <title>A multidimensional chromatography technology for in-depth phosphoproteome analysis.</title>
        <authorList>
            <person name="Albuquerque C.P."/>
            <person name="Smolka M.B."/>
            <person name="Payne S.H."/>
            <person name="Bafna V."/>
            <person name="Eng J."/>
            <person name="Zhou H."/>
        </authorList>
    </citation>
    <scope>PHOSPHORYLATION [LARGE SCALE ANALYSIS] AT SER-964</scope>
    <scope>IDENTIFICATION BY MASS SPECTROMETRY [LARGE SCALE ANALYSIS]</scope>
</reference>
<reference key="20">
    <citation type="journal article" date="2009" name="BMC Genomics">
        <title>Genetic basis of arsenite and cadmium tolerance in Saccharomyces cerevisiae.</title>
        <authorList>
            <person name="Thorsen M."/>
            <person name="Perrone G.G."/>
            <person name="Kristiansson E."/>
            <person name="Traini M."/>
            <person name="Ye T."/>
            <person name="Dawes I.W."/>
            <person name="Nerman O."/>
            <person name="Tamas M.J."/>
        </authorList>
    </citation>
    <scope>FUNCTION</scope>
</reference>
<reference key="21">
    <citation type="journal article" date="2009" name="Science">
        <title>Global analysis of Cdk1 substrate phosphorylation sites provides insights into evolution.</title>
        <authorList>
            <person name="Holt L.J."/>
            <person name="Tuch B.B."/>
            <person name="Villen J."/>
            <person name="Johnson A.D."/>
            <person name="Gygi S.P."/>
            <person name="Morgan D.O."/>
        </authorList>
    </citation>
    <scope>PHOSPHORYLATION [LARGE SCALE ANALYSIS] AT THR-43 AND SER-1126</scope>
    <scope>IDENTIFICATION BY MASS SPECTROMETRY [LARGE SCALE ANALYSIS]</scope>
</reference>
<reference key="22">
    <citation type="journal article" date="2010" name="Eukaryot. Cell">
        <title>Roles of the Snf1-activating kinases during nitrogen limitation and pseudohyphal differentiation in Saccharomyces cerevisiae.</title>
        <authorList>
            <person name="Orlova M."/>
            <person name="Ozcetin H."/>
            <person name="Barrett L."/>
            <person name="Kuchin S."/>
        </authorList>
    </citation>
    <scope>FUNCTION</scope>
</reference>
<reference key="23">
    <citation type="journal article" date="2011" name="Eukaryot. Cell">
        <title>Interaction of SNF1 protein kinase with its activating kinase Sak1.</title>
        <authorList>
            <person name="Liu Y."/>
            <person name="Xu X."/>
            <person name="Carlson M."/>
        </authorList>
    </citation>
    <scope>FUNCTION</scope>
    <scope>DOMAIN</scope>
    <scope>INTERACTION WITH REG1 AND SNF1</scope>
</reference>
<evidence type="ECO:0000255" key="1">
    <source>
        <dbReference type="PROSITE-ProRule" id="PRU00159"/>
    </source>
</evidence>
<evidence type="ECO:0000255" key="2">
    <source>
        <dbReference type="PROSITE-ProRule" id="PRU10027"/>
    </source>
</evidence>
<evidence type="ECO:0000256" key="3">
    <source>
        <dbReference type="SAM" id="MobiDB-lite"/>
    </source>
</evidence>
<evidence type="ECO:0000269" key="4">
    <source>
    </source>
</evidence>
<evidence type="ECO:0000269" key="5">
    <source>
    </source>
</evidence>
<evidence type="ECO:0000269" key="6">
    <source>
    </source>
</evidence>
<evidence type="ECO:0000269" key="7">
    <source>
    </source>
</evidence>
<evidence type="ECO:0000269" key="8">
    <source>
    </source>
</evidence>
<evidence type="ECO:0000269" key="9">
    <source>
    </source>
</evidence>
<evidence type="ECO:0000269" key="10">
    <source>
    </source>
</evidence>
<evidence type="ECO:0000269" key="11">
    <source>
    </source>
</evidence>
<evidence type="ECO:0000269" key="12">
    <source>
    </source>
</evidence>
<evidence type="ECO:0000269" key="13">
    <source>
    </source>
</evidence>
<evidence type="ECO:0000269" key="14">
    <source>
    </source>
</evidence>
<evidence type="ECO:0000269" key="15">
    <source>
    </source>
</evidence>
<evidence type="ECO:0000269" key="16">
    <source>
    </source>
</evidence>
<evidence type="ECO:0000269" key="17">
    <source>
    </source>
</evidence>
<evidence type="ECO:0000269" key="18">
    <source>
    </source>
</evidence>
<evidence type="ECO:0000305" key="19"/>
<evidence type="ECO:0007744" key="20">
    <source>
    </source>
</evidence>
<evidence type="ECO:0007744" key="21">
    <source>
    </source>
</evidence>
<evidence type="ECO:0007744" key="22">
    <source>
    </source>
</evidence>
<evidence type="ECO:0007744" key="23">
    <source>
    </source>
</evidence>
<comment type="function">
    <text evidence="4 5 6 9 10 11 12 13 14 15 16 17 18">Serine/threonine-protein kinase that phosphorylates SNF1, the catalytic subunit of the SNF1 kinase complex. Acts as an activator of the SNF1 kinase complex and controls its nuclear localization upon glucose and nitrogen depletion. Also required for SNF1 kinase activation under other stress conditions like alkaline pH or presence of cadmium.</text>
</comment>
<comment type="catalytic activity">
    <reaction>
        <text>L-seryl-[protein] + ATP = O-phospho-L-seryl-[protein] + ADP + H(+)</text>
        <dbReference type="Rhea" id="RHEA:17989"/>
        <dbReference type="Rhea" id="RHEA-COMP:9863"/>
        <dbReference type="Rhea" id="RHEA-COMP:11604"/>
        <dbReference type="ChEBI" id="CHEBI:15378"/>
        <dbReference type="ChEBI" id="CHEBI:29999"/>
        <dbReference type="ChEBI" id="CHEBI:30616"/>
        <dbReference type="ChEBI" id="CHEBI:83421"/>
        <dbReference type="ChEBI" id="CHEBI:456216"/>
        <dbReference type="EC" id="2.7.11.1"/>
    </reaction>
</comment>
<comment type="catalytic activity">
    <reaction>
        <text>L-threonyl-[protein] + ATP = O-phospho-L-threonyl-[protein] + ADP + H(+)</text>
        <dbReference type="Rhea" id="RHEA:46608"/>
        <dbReference type="Rhea" id="RHEA-COMP:11060"/>
        <dbReference type="Rhea" id="RHEA-COMP:11605"/>
        <dbReference type="ChEBI" id="CHEBI:15378"/>
        <dbReference type="ChEBI" id="CHEBI:30013"/>
        <dbReference type="ChEBI" id="CHEBI:30616"/>
        <dbReference type="ChEBI" id="CHEBI:61977"/>
        <dbReference type="ChEBI" id="CHEBI:456216"/>
        <dbReference type="EC" id="2.7.11.1"/>
    </reaction>
</comment>
<comment type="subunit">
    <text evidence="4 11 13 17">Associates with the SNF1 kinase complex. Interacts with SNF1 and REG1.</text>
</comment>
<comment type="interaction">
    <interactant intactId="EBI-12863">
        <id>P38990</id>
    </interactant>
    <interactant intactId="EBI-4192">
        <id>Q00684</id>
        <label>CDC14</label>
    </interactant>
    <organismsDiffer>false</organismsDiffer>
    <experiments>2</experiments>
</comment>
<comment type="subcellular location">
    <subcellularLocation>
        <location evidence="7">Cytoplasm</location>
    </subcellularLocation>
</comment>
<comment type="domain">
    <text evidence="12 17">The kinase domain is not sufficient by themself for proper function and that the non-conserved N-terminal and C-terminal domains are critical for the biological activity. The C-terminus promotes interaction of ELM1 and TOS3 kinases with SNF1.</text>
</comment>
<comment type="PTM">
    <text>Autophosphorylated.</text>
</comment>
<comment type="miscellaneous">
    <text evidence="8">Present with 752 molecules/cell in log phase SD medium.</text>
</comment>
<comment type="similarity">
    <text evidence="1">Belongs to the protein kinase superfamily. Ser/Thr protein kinase family.</text>
</comment>
<sequence length="1142" mass="126872">MDRSDKKVNVEEVNVPSNLQIELEKSGTSSSVSLRSPTKSSATNLAGMAEGARDNASIASSSVDSLNMLLERQRVRQLNHPQHQQHISSSLAKTPTTTSSFCSSGSSKNKVKETNRISLTYDPVSKRKVLNTYEIIKELGHGQHGKVKLARDILSKQLVAIKIVDRHEKKQRKFFTFIKSSKISENDKIKREIAIMKKCHHKHVVQLIEVLDDLKSRKIYLVLEYCSRGEVKWCPPDCMESDAKGPSLLSFQETREILRGVVLGLEYLHYQGIIHRDIKPANLLISGDGTVKISDFGVSLAASSTNSSDSSESLDELELAKTVGTPAFFAPEMCLGEDAFTRYNLTKENLFRGSCISFMIDIWAVGVTLYCLLFGMLPFFSDFELKLFEKIVNDPLKFPTFKEIQSNKVSKVSCEEEYEMAKDLLLKLLEKNPQKRMTIPAIKKHPFVSWDFDHVPENDEKLLSSVLEQKLRFQCNQTDQFEPISISKHELKNAVSGVGKKIKESVLKSIPLKDPSDLSNKNYLHPTETTRGRGDANVIVSEGSVLSNIKELSANDGCLNTDSDTNININDDDHYSGDDNDGHLTKRELERELNKFDDKHEAGNMVNLPINSSFASLDSFYIDNFAMARMGMSSPEAGDSVSSVPNLPSAPSSTRLGRSPVFSGVTNQPSPIRPVLPQQKSSFCATGRYDKSHNSLLRNSSSHLTSYNSGRPSSRTGRMNSRNQNLPKIPNSLSKISTTKLTELRVPKDSEIPSPAKNPNADRLRRFPVKKNTKTPAIKDPPRININSSDKSGSKNSPIKSLYQRMKQSKDNSKTFEVRRGNFFSHFNGDDDDSSSQSSVTSSGSESDSELSSTSSSCTSGTQSRNSSNNNAYSETESLPFEFGVDSEDGSGVLLRDLPNEDQIRPFLDIQPCRRMKVKSSLNLEPPSVSSSSSSSSDEDELILNVGTAGHRRRHNSSKLSELSNSPQKGSNNFMYSNGSVHDSETTITPQNMDDLTLHQALSRSQPISKPGPLVLPKRLDQKKATTETSNLTDIVEFNGNNDHRKDKNFDKVLYSRDLLKDALSSTNAGRRRSIPSNKIRGRKDASITMSTNVGNDEHARNTSCHGDKGQENGAIKQRTHERSRSLTVAELNEEKRRSALP</sequence>
<protein>
    <recommendedName>
        <fullName>SNF1-activating kinase 1</fullName>
        <ecNumber>2.7.11.1</ecNumber>
    </recommendedName>
</protein>
<gene>
    <name type="primary">SAK1</name>
    <name type="synonym">PAK1</name>
    <name type="ordered locus">YER129W</name>
    <name type="ORF">SYGP-ORF45</name>
</gene>
<organism>
    <name type="scientific">Saccharomyces cerevisiae (strain ATCC 204508 / S288c)</name>
    <name type="common">Baker's yeast</name>
    <dbReference type="NCBI Taxonomy" id="559292"/>
    <lineage>
        <taxon>Eukaryota</taxon>
        <taxon>Fungi</taxon>
        <taxon>Dikarya</taxon>
        <taxon>Ascomycota</taxon>
        <taxon>Saccharomycotina</taxon>
        <taxon>Saccharomycetes</taxon>
        <taxon>Saccharomycetales</taxon>
        <taxon>Saccharomycetaceae</taxon>
        <taxon>Saccharomyces</taxon>
    </lineage>
</organism>
<accession>P38990</accession>
<accession>D3DM35</accession>
<proteinExistence type="evidence at protein level"/>
<dbReference type="EC" id="2.7.11.1"/>
<dbReference type="EMBL" id="U18916">
    <property type="protein sequence ID" value="AAC03227.1"/>
    <property type="molecule type" value="Genomic_DNA"/>
</dbReference>
<dbReference type="EMBL" id="U13398">
    <property type="protein sequence ID" value="AAC49840.1"/>
    <property type="status" value="ALT_TERM"/>
    <property type="molecule type" value="Genomic_DNA"/>
</dbReference>
<dbReference type="EMBL" id="BK006939">
    <property type="protein sequence ID" value="DAA07789.1"/>
    <property type="molecule type" value="Genomic_DNA"/>
</dbReference>
<dbReference type="PIR" id="S50632">
    <property type="entry name" value="S50632"/>
</dbReference>
<dbReference type="RefSeq" id="NP_011055.3">
    <property type="nucleotide sequence ID" value="NM_001179019.3"/>
</dbReference>
<dbReference type="SMR" id="P38990"/>
<dbReference type="BioGRID" id="36873">
    <property type="interactions" value="169"/>
</dbReference>
<dbReference type="DIP" id="DIP-5407N"/>
<dbReference type="FunCoup" id="P38990">
    <property type="interactions" value="308"/>
</dbReference>
<dbReference type="IntAct" id="P38990">
    <property type="interactions" value="20"/>
</dbReference>
<dbReference type="MINT" id="P38990"/>
<dbReference type="STRING" id="4932.YER129W"/>
<dbReference type="iPTMnet" id="P38990"/>
<dbReference type="PaxDb" id="4932-YER129W"/>
<dbReference type="PeptideAtlas" id="P38990"/>
<dbReference type="EnsemblFungi" id="YER129W_mRNA">
    <property type="protein sequence ID" value="YER129W"/>
    <property type="gene ID" value="YER129W"/>
</dbReference>
<dbReference type="GeneID" id="856866"/>
<dbReference type="KEGG" id="sce:YER129W"/>
<dbReference type="AGR" id="SGD:S000000931"/>
<dbReference type="SGD" id="S000000931">
    <property type="gene designation" value="SAK1"/>
</dbReference>
<dbReference type="VEuPathDB" id="FungiDB:YER129W"/>
<dbReference type="eggNOG" id="KOG0585">
    <property type="taxonomic scope" value="Eukaryota"/>
</dbReference>
<dbReference type="GeneTree" id="ENSGT00940000161828"/>
<dbReference type="HOGENOM" id="CLU_003784_0_0_1"/>
<dbReference type="InParanoid" id="P38990"/>
<dbReference type="OMA" id="CISFMID"/>
<dbReference type="OrthoDB" id="68483at2759"/>
<dbReference type="BioCyc" id="YEAST:G3O-30292-MONOMER"/>
<dbReference type="BRENDA" id="2.7.11.1">
    <property type="organism ID" value="984"/>
</dbReference>
<dbReference type="BioGRID-ORCS" id="856866">
    <property type="hits" value="0 hits in 13 CRISPR screens"/>
</dbReference>
<dbReference type="PRO" id="PR:P38990"/>
<dbReference type="Proteomes" id="UP000002311">
    <property type="component" value="Chromosome V"/>
</dbReference>
<dbReference type="RNAct" id="P38990">
    <property type="molecule type" value="protein"/>
</dbReference>
<dbReference type="GO" id="GO:0005737">
    <property type="term" value="C:cytoplasm"/>
    <property type="evidence" value="ECO:0000314"/>
    <property type="project" value="SGD"/>
</dbReference>
<dbReference type="GO" id="GO:0005829">
    <property type="term" value="C:cytosol"/>
    <property type="evidence" value="ECO:0007005"/>
    <property type="project" value="SGD"/>
</dbReference>
<dbReference type="GO" id="GO:0005524">
    <property type="term" value="F:ATP binding"/>
    <property type="evidence" value="ECO:0007669"/>
    <property type="project" value="UniProtKB-KW"/>
</dbReference>
<dbReference type="GO" id="GO:0004672">
    <property type="term" value="F:protein kinase activity"/>
    <property type="evidence" value="ECO:0007005"/>
    <property type="project" value="SGD"/>
</dbReference>
<dbReference type="GO" id="GO:0106310">
    <property type="term" value="F:protein serine kinase activity"/>
    <property type="evidence" value="ECO:0007669"/>
    <property type="project" value="RHEA"/>
</dbReference>
<dbReference type="GO" id="GO:0004674">
    <property type="term" value="F:protein serine/threonine kinase activity"/>
    <property type="evidence" value="ECO:0000314"/>
    <property type="project" value="SGD"/>
</dbReference>
<dbReference type="GO" id="GO:0042149">
    <property type="term" value="P:cellular response to glucose starvation"/>
    <property type="evidence" value="ECO:0000315"/>
    <property type="project" value="SGD"/>
</dbReference>
<dbReference type="GO" id="GO:0051726">
    <property type="term" value="P:regulation of cell cycle"/>
    <property type="evidence" value="ECO:0000318"/>
    <property type="project" value="GO_Central"/>
</dbReference>
<dbReference type="GO" id="GO:0090329">
    <property type="term" value="P:regulation of DNA-templated DNA replication"/>
    <property type="evidence" value="ECO:0000316"/>
    <property type="project" value="SGD"/>
</dbReference>
<dbReference type="GO" id="GO:0005979">
    <property type="term" value="P:regulation of glycogen biosynthetic process"/>
    <property type="evidence" value="ECO:0000315"/>
    <property type="project" value="SGD"/>
</dbReference>
<dbReference type="GO" id="GO:1900180">
    <property type="term" value="P:regulation of protein localization to nucleus"/>
    <property type="evidence" value="ECO:0000315"/>
    <property type="project" value="SGD"/>
</dbReference>
<dbReference type="GO" id="GO:2000220">
    <property type="term" value="P:regulation of pseudohyphal growth"/>
    <property type="evidence" value="ECO:0000315"/>
    <property type="project" value="SGD"/>
</dbReference>
<dbReference type="CDD" id="cd14008">
    <property type="entry name" value="STKc_LKB1_CaMKK"/>
    <property type="match status" value="1"/>
</dbReference>
<dbReference type="FunFam" id="3.30.200.20:FF:000206">
    <property type="entry name" value="Serine/threonine-protein kinase Ssp1"/>
    <property type="match status" value="1"/>
</dbReference>
<dbReference type="FunFam" id="1.10.510.10:FF:000829">
    <property type="entry name" value="Serine/threonine-protein kinase TOS3"/>
    <property type="match status" value="1"/>
</dbReference>
<dbReference type="Gene3D" id="1.10.510.10">
    <property type="entry name" value="Transferase(Phosphotransferase) domain 1"/>
    <property type="match status" value="1"/>
</dbReference>
<dbReference type="InterPro" id="IPR011009">
    <property type="entry name" value="Kinase-like_dom_sf"/>
</dbReference>
<dbReference type="InterPro" id="IPR000719">
    <property type="entry name" value="Prot_kinase_dom"/>
</dbReference>
<dbReference type="InterPro" id="IPR017441">
    <property type="entry name" value="Protein_kinase_ATP_BS"/>
</dbReference>
<dbReference type="InterPro" id="IPR008271">
    <property type="entry name" value="Ser/Thr_kinase_AS"/>
</dbReference>
<dbReference type="PANTHER" id="PTHR43895">
    <property type="entry name" value="CALCIUM/CALMODULIN-DEPENDENT PROTEIN KINASE KINASE-RELATED"/>
    <property type="match status" value="1"/>
</dbReference>
<dbReference type="PANTHER" id="PTHR43895:SF152">
    <property type="entry name" value="SERINE_THREONINE-PROTEIN KINASE TOS3"/>
    <property type="match status" value="1"/>
</dbReference>
<dbReference type="Pfam" id="PF00069">
    <property type="entry name" value="Pkinase"/>
    <property type="match status" value="1"/>
</dbReference>
<dbReference type="SMART" id="SM00220">
    <property type="entry name" value="S_TKc"/>
    <property type="match status" value="1"/>
</dbReference>
<dbReference type="SUPFAM" id="SSF56112">
    <property type="entry name" value="Protein kinase-like (PK-like)"/>
    <property type="match status" value="1"/>
</dbReference>
<dbReference type="PROSITE" id="PS00107">
    <property type="entry name" value="PROTEIN_KINASE_ATP"/>
    <property type="match status" value="1"/>
</dbReference>
<dbReference type="PROSITE" id="PS50011">
    <property type="entry name" value="PROTEIN_KINASE_DOM"/>
    <property type="match status" value="1"/>
</dbReference>
<dbReference type="PROSITE" id="PS00108">
    <property type="entry name" value="PROTEIN_KINASE_ST"/>
    <property type="match status" value="1"/>
</dbReference>
<feature type="chain" id="PRO_0000086464" description="SNF1-activating kinase 1">
    <location>
        <begin position="1"/>
        <end position="1142"/>
    </location>
</feature>
<feature type="domain" description="Protein kinase" evidence="1">
    <location>
        <begin position="133"/>
        <end position="448"/>
    </location>
</feature>
<feature type="region of interest" description="Disordered" evidence="3">
    <location>
        <begin position="22"/>
        <end position="41"/>
    </location>
</feature>
<feature type="region of interest" description="Disordered" evidence="3">
    <location>
        <begin position="82"/>
        <end position="107"/>
    </location>
</feature>
<feature type="region of interest" description="Disordered" evidence="3">
    <location>
        <begin position="634"/>
        <end position="678"/>
    </location>
</feature>
<feature type="region of interest" description="Disordered" evidence="3">
    <location>
        <begin position="694"/>
        <end position="799"/>
    </location>
</feature>
<feature type="region of interest" description="Disordered" evidence="3">
    <location>
        <begin position="825"/>
        <end position="875"/>
    </location>
</feature>
<feature type="region of interest" description="Disordered" evidence="3">
    <location>
        <begin position="919"/>
        <end position="971"/>
    </location>
</feature>
<feature type="region of interest" description="Disordered" evidence="3">
    <location>
        <begin position="1005"/>
        <end position="1027"/>
    </location>
</feature>
<feature type="region of interest" description="Disordered" evidence="3">
    <location>
        <begin position="1066"/>
        <end position="1142"/>
    </location>
</feature>
<feature type="compositionally biased region" description="Polar residues" evidence="3">
    <location>
        <begin position="82"/>
        <end position="93"/>
    </location>
</feature>
<feature type="compositionally biased region" description="Low complexity" evidence="3">
    <location>
        <begin position="94"/>
        <end position="107"/>
    </location>
</feature>
<feature type="compositionally biased region" description="Polar residues" evidence="3">
    <location>
        <begin position="640"/>
        <end position="656"/>
    </location>
</feature>
<feature type="compositionally biased region" description="Low complexity" evidence="3">
    <location>
        <begin position="694"/>
        <end position="706"/>
    </location>
</feature>
<feature type="compositionally biased region" description="Polar residues" evidence="3">
    <location>
        <begin position="707"/>
        <end position="741"/>
    </location>
</feature>
<feature type="compositionally biased region" description="Basic and acidic residues" evidence="3">
    <location>
        <begin position="742"/>
        <end position="751"/>
    </location>
</feature>
<feature type="compositionally biased region" description="Polar residues" evidence="3">
    <location>
        <begin position="785"/>
        <end position="799"/>
    </location>
</feature>
<feature type="compositionally biased region" description="Low complexity" evidence="3">
    <location>
        <begin position="835"/>
        <end position="868"/>
    </location>
</feature>
<feature type="compositionally biased region" description="Low complexity" evidence="3">
    <location>
        <begin position="920"/>
        <end position="936"/>
    </location>
</feature>
<feature type="compositionally biased region" description="Polar residues" evidence="3">
    <location>
        <begin position="958"/>
        <end position="971"/>
    </location>
</feature>
<feature type="compositionally biased region" description="Basic and acidic residues" evidence="3">
    <location>
        <begin position="1096"/>
        <end position="1111"/>
    </location>
</feature>
<feature type="compositionally biased region" description="Basic and acidic residues" evidence="3">
    <location>
        <begin position="1133"/>
        <end position="1142"/>
    </location>
</feature>
<feature type="active site" description="Proton acceptor" evidence="1 2">
    <location>
        <position position="277"/>
    </location>
</feature>
<feature type="binding site" evidence="1">
    <location>
        <begin position="139"/>
        <end position="147"/>
    </location>
    <ligand>
        <name>ATP</name>
        <dbReference type="ChEBI" id="CHEBI:30616"/>
    </ligand>
</feature>
<feature type="binding site" evidence="1">
    <location>
        <position position="162"/>
    </location>
    <ligand>
        <name>ATP</name>
        <dbReference type="ChEBI" id="CHEBI:30616"/>
    </ligand>
</feature>
<feature type="modified residue" description="Phosphothreonine" evidence="23">
    <location>
        <position position="43"/>
    </location>
</feature>
<feature type="modified residue" description="Phosphoserine" evidence="22">
    <location>
        <position position="964"/>
    </location>
</feature>
<feature type="modified residue" description="Phosphoserine" evidence="20 21 23">
    <location>
        <position position="1126"/>
    </location>
</feature>
<feature type="sequence conflict" description="In Ref. 3; AAC49840." evidence="19" ref="3">
    <original>Q</original>
    <variation>H</variation>
    <location>
        <position position="171"/>
    </location>
</feature>
<feature type="sequence conflict" description="In Ref. 3; AAC49840." evidence="19" ref="3">
    <original>EYL</original>
    <variation>DS</variation>
    <location>
        <begin position="266"/>
        <end position="268"/>
    </location>
</feature>
<name>SAK1_YEAST</name>
<keyword id="KW-0067">ATP-binding</keyword>
<keyword id="KW-0963">Cytoplasm</keyword>
<keyword id="KW-0418">Kinase</keyword>
<keyword id="KW-0547">Nucleotide-binding</keyword>
<keyword id="KW-0597">Phosphoprotein</keyword>
<keyword id="KW-1185">Reference proteome</keyword>
<keyword id="KW-0723">Serine/threonine-protein kinase</keyword>
<keyword id="KW-0808">Transferase</keyword>